<comment type="function">
    <text evidence="1">Allows the formation of correctly charged Asn-tRNA(Asn) or Gln-tRNA(Gln) through the transamidation of misacylated Asp-tRNA(Asn) or Glu-tRNA(Gln) in organisms which lack either or both of asparaginyl-tRNA or glutaminyl-tRNA synthetases. The reaction takes place in the presence of glutamine and ATP through an activated phospho-Asp-tRNA(Asn) or phospho-Glu-tRNA(Gln).</text>
</comment>
<comment type="catalytic activity">
    <reaction evidence="1">
        <text>L-glutamyl-tRNA(Gln) + L-glutamine + ATP + H2O = L-glutaminyl-tRNA(Gln) + L-glutamate + ADP + phosphate + H(+)</text>
        <dbReference type="Rhea" id="RHEA:17521"/>
        <dbReference type="Rhea" id="RHEA-COMP:9681"/>
        <dbReference type="Rhea" id="RHEA-COMP:9684"/>
        <dbReference type="ChEBI" id="CHEBI:15377"/>
        <dbReference type="ChEBI" id="CHEBI:15378"/>
        <dbReference type="ChEBI" id="CHEBI:29985"/>
        <dbReference type="ChEBI" id="CHEBI:30616"/>
        <dbReference type="ChEBI" id="CHEBI:43474"/>
        <dbReference type="ChEBI" id="CHEBI:58359"/>
        <dbReference type="ChEBI" id="CHEBI:78520"/>
        <dbReference type="ChEBI" id="CHEBI:78521"/>
        <dbReference type="ChEBI" id="CHEBI:456216"/>
    </reaction>
</comment>
<comment type="catalytic activity">
    <reaction evidence="1">
        <text>L-aspartyl-tRNA(Asn) + L-glutamine + ATP + H2O = L-asparaginyl-tRNA(Asn) + L-glutamate + ADP + phosphate + 2 H(+)</text>
        <dbReference type="Rhea" id="RHEA:14513"/>
        <dbReference type="Rhea" id="RHEA-COMP:9674"/>
        <dbReference type="Rhea" id="RHEA-COMP:9677"/>
        <dbReference type="ChEBI" id="CHEBI:15377"/>
        <dbReference type="ChEBI" id="CHEBI:15378"/>
        <dbReference type="ChEBI" id="CHEBI:29985"/>
        <dbReference type="ChEBI" id="CHEBI:30616"/>
        <dbReference type="ChEBI" id="CHEBI:43474"/>
        <dbReference type="ChEBI" id="CHEBI:58359"/>
        <dbReference type="ChEBI" id="CHEBI:78515"/>
        <dbReference type="ChEBI" id="CHEBI:78516"/>
        <dbReference type="ChEBI" id="CHEBI:456216"/>
    </reaction>
</comment>
<comment type="subunit">
    <text evidence="1">Heterotrimer of A, B and C subunits.</text>
</comment>
<comment type="similarity">
    <text evidence="1">Belongs to the GatB/GatE family. GatB subfamily.</text>
</comment>
<sequence>MTWETVIGLEIHVQLNTKSKIFSGASTAFGAEPNAHASVVECALPGVLPVMNREVVEKAIKLGLALDAKINRKNVFDRKNYFYPDLPKGYQISQLDLPIVEHGKLEIVVGGDVKTINVTRAHMEEDAGKSVHEGLNGATGIDLNRAGTPLLEVVSEPEMRSAAEAVAYAKALHSLVTWLDICDGNMAEGSFRIDANVSVRPKGQAEFGTRREIKNLNSFRFLDQAINYEAEAQIEILEDGGTVQQATMLFDPEKGETRVMRLKEDAHDYGYFPDPDLLPVIISDAQMQKAKAEMPELPKEMAARFVADYGVSEYDARLLTASRVQAAYFEEAAKESGQGKPTANWMNGELAATLNKEGMELADSPITAPRLAALVGKIADGTLSGKLAKKAFEAMWAEPETSIAEIIEKHSLQQMTDTGAVEAMVDEVLANNAKAVEQFKSGNEKALNAIVGQVMKTSKGKANPAQVQELIKAKLA</sequence>
<feature type="chain" id="PRO_1000095227" description="Aspartyl/glutamyl-tRNA(Asn/Gln) amidotransferase subunit B">
    <location>
        <begin position="1"/>
        <end position="476"/>
    </location>
</feature>
<organism>
    <name type="scientific">Neisseria gonorrhoeae (strain NCCP11945)</name>
    <dbReference type="NCBI Taxonomy" id="521006"/>
    <lineage>
        <taxon>Bacteria</taxon>
        <taxon>Pseudomonadati</taxon>
        <taxon>Pseudomonadota</taxon>
        <taxon>Betaproteobacteria</taxon>
        <taxon>Neisseriales</taxon>
        <taxon>Neisseriaceae</taxon>
        <taxon>Neisseria</taxon>
    </lineage>
</organism>
<keyword id="KW-0067">ATP-binding</keyword>
<keyword id="KW-0436">Ligase</keyword>
<keyword id="KW-0547">Nucleotide-binding</keyword>
<keyword id="KW-0648">Protein biosynthesis</keyword>
<dbReference type="EC" id="6.3.5.-" evidence="1"/>
<dbReference type="EMBL" id="CP001050">
    <property type="protein sequence ID" value="ACF29923.1"/>
    <property type="molecule type" value="Genomic_DNA"/>
</dbReference>
<dbReference type="RefSeq" id="WP_003688837.1">
    <property type="nucleotide sequence ID" value="NC_011035.1"/>
</dbReference>
<dbReference type="SMR" id="B4RM87"/>
<dbReference type="KEGG" id="ngk:NGK_1247"/>
<dbReference type="HOGENOM" id="CLU_019240_0_0_4"/>
<dbReference type="Proteomes" id="UP000002564">
    <property type="component" value="Chromosome"/>
</dbReference>
<dbReference type="GO" id="GO:0050566">
    <property type="term" value="F:asparaginyl-tRNA synthase (glutamine-hydrolyzing) activity"/>
    <property type="evidence" value="ECO:0007669"/>
    <property type="project" value="RHEA"/>
</dbReference>
<dbReference type="GO" id="GO:0005524">
    <property type="term" value="F:ATP binding"/>
    <property type="evidence" value="ECO:0007669"/>
    <property type="project" value="UniProtKB-KW"/>
</dbReference>
<dbReference type="GO" id="GO:0050567">
    <property type="term" value="F:glutaminyl-tRNA synthase (glutamine-hydrolyzing) activity"/>
    <property type="evidence" value="ECO:0007669"/>
    <property type="project" value="UniProtKB-UniRule"/>
</dbReference>
<dbReference type="GO" id="GO:0070681">
    <property type="term" value="P:glutaminyl-tRNAGln biosynthesis via transamidation"/>
    <property type="evidence" value="ECO:0007669"/>
    <property type="project" value="TreeGrafter"/>
</dbReference>
<dbReference type="GO" id="GO:0006412">
    <property type="term" value="P:translation"/>
    <property type="evidence" value="ECO:0007669"/>
    <property type="project" value="UniProtKB-UniRule"/>
</dbReference>
<dbReference type="FunFam" id="1.10.10.410:FF:000001">
    <property type="entry name" value="Aspartyl/glutamyl-tRNA(Asn/Gln) amidotransferase subunit B"/>
    <property type="match status" value="1"/>
</dbReference>
<dbReference type="FunFam" id="1.10.150.380:FF:000001">
    <property type="entry name" value="Aspartyl/glutamyl-tRNA(Asn/Gln) amidotransferase subunit B"/>
    <property type="match status" value="1"/>
</dbReference>
<dbReference type="Gene3D" id="1.10.10.410">
    <property type="match status" value="1"/>
</dbReference>
<dbReference type="Gene3D" id="1.10.150.380">
    <property type="entry name" value="GatB domain, N-terminal subdomain"/>
    <property type="match status" value="1"/>
</dbReference>
<dbReference type="HAMAP" id="MF_00121">
    <property type="entry name" value="GatB"/>
    <property type="match status" value="1"/>
</dbReference>
<dbReference type="InterPro" id="IPR017959">
    <property type="entry name" value="Asn/Gln-tRNA_amidoTrfase_suB/E"/>
</dbReference>
<dbReference type="InterPro" id="IPR006075">
    <property type="entry name" value="Asn/Gln-tRNA_Trfase_suB/E_cat"/>
</dbReference>
<dbReference type="InterPro" id="IPR018027">
    <property type="entry name" value="Asn/Gln_amidotransferase"/>
</dbReference>
<dbReference type="InterPro" id="IPR003789">
    <property type="entry name" value="Asn/Gln_tRNA_amidoTrase-B-like"/>
</dbReference>
<dbReference type="InterPro" id="IPR004413">
    <property type="entry name" value="GatB"/>
</dbReference>
<dbReference type="InterPro" id="IPR042114">
    <property type="entry name" value="GatB_C_1"/>
</dbReference>
<dbReference type="InterPro" id="IPR023168">
    <property type="entry name" value="GatB_Yqey_C_2"/>
</dbReference>
<dbReference type="InterPro" id="IPR017958">
    <property type="entry name" value="Gln-tRNA_amidoTrfase_suB_CS"/>
</dbReference>
<dbReference type="InterPro" id="IPR014746">
    <property type="entry name" value="Gln_synth/guanido_kin_cat_dom"/>
</dbReference>
<dbReference type="NCBIfam" id="TIGR00133">
    <property type="entry name" value="gatB"/>
    <property type="match status" value="1"/>
</dbReference>
<dbReference type="NCBIfam" id="NF004012">
    <property type="entry name" value="PRK05477.1-2"/>
    <property type="match status" value="1"/>
</dbReference>
<dbReference type="NCBIfam" id="NF004014">
    <property type="entry name" value="PRK05477.1-4"/>
    <property type="match status" value="1"/>
</dbReference>
<dbReference type="NCBIfam" id="NF004015">
    <property type="entry name" value="PRK05477.1-5"/>
    <property type="match status" value="1"/>
</dbReference>
<dbReference type="PANTHER" id="PTHR11659">
    <property type="entry name" value="GLUTAMYL-TRNA GLN AMIDOTRANSFERASE SUBUNIT B MITOCHONDRIAL AND PROKARYOTIC PET112-RELATED"/>
    <property type="match status" value="1"/>
</dbReference>
<dbReference type="PANTHER" id="PTHR11659:SF0">
    <property type="entry name" value="GLUTAMYL-TRNA(GLN) AMIDOTRANSFERASE SUBUNIT B, MITOCHONDRIAL"/>
    <property type="match status" value="1"/>
</dbReference>
<dbReference type="Pfam" id="PF02934">
    <property type="entry name" value="GatB_N"/>
    <property type="match status" value="1"/>
</dbReference>
<dbReference type="Pfam" id="PF02637">
    <property type="entry name" value="GatB_Yqey"/>
    <property type="match status" value="1"/>
</dbReference>
<dbReference type="SMART" id="SM00845">
    <property type="entry name" value="GatB_Yqey"/>
    <property type="match status" value="1"/>
</dbReference>
<dbReference type="SUPFAM" id="SSF89095">
    <property type="entry name" value="GatB/YqeY motif"/>
    <property type="match status" value="1"/>
</dbReference>
<dbReference type="SUPFAM" id="SSF55931">
    <property type="entry name" value="Glutamine synthetase/guanido kinase"/>
    <property type="match status" value="1"/>
</dbReference>
<dbReference type="PROSITE" id="PS01234">
    <property type="entry name" value="GATB"/>
    <property type="match status" value="1"/>
</dbReference>
<protein>
    <recommendedName>
        <fullName evidence="1">Aspartyl/glutamyl-tRNA(Asn/Gln) amidotransferase subunit B</fullName>
        <shortName evidence="1">Asp/Glu-ADT subunit B</shortName>
        <ecNumber evidence="1">6.3.5.-</ecNumber>
    </recommendedName>
</protein>
<gene>
    <name evidence="1" type="primary">gatB</name>
    <name type="ordered locus">NGK_1247</name>
</gene>
<accession>B4RM87</accession>
<name>GATB_NEIG2</name>
<proteinExistence type="inferred from homology"/>
<reference key="1">
    <citation type="journal article" date="2008" name="J. Bacteriol.">
        <title>Complete genome sequence of Neisseria gonorrhoeae NCCP11945.</title>
        <authorList>
            <person name="Chung G.T."/>
            <person name="Yoo J.S."/>
            <person name="Oh H.B."/>
            <person name="Lee Y.S."/>
            <person name="Cha S.H."/>
            <person name="Kim S.J."/>
            <person name="Yoo C.K."/>
        </authorList>
    </citation>
    <scope>NUCLEOTIDE SEQUENCE [LARGE SCALE GENOMIC DNA]</scope>
    <source>
        <strain>NCCP11945</strain>
    </source>
</reference>
<evidence type="ECO:0000255" key="1">
    <source>
        <dbReference type="HAMAP-Rule" id="MF_00121"/>
    </source>
</evidence>